<proteinExistence type="inferred from homology"/>
<organism>
    <name type="scientific">Oryza sativa subsp. japonica</name>
    <name type="common">Rice</name>
    <dbReference type="NCBI Taxonomy" id="39947"/>
    <lineage>
        <taxon>Eukaryota</taxon>
        <taxon>Viridiplantae</taxon>
        <taxon>Streptophyta</taxon>
        <taxon>Embryophyta</taxon>
        <taxon>Tracheophyta</taxon>
        <taxon>Spermatophyta</taxon>
        <taxon>Magnoliopsida</taxon>
        <taxon>Liliopsida</taxon>
        <taxon>Poales</taxon>
        <taxon>Poaceae</taxon>
        <taxon>BOP clade</taxon>
        <taxon>Oryzoideae</taxon>
        <taxon>Oryzeae</taxon>
        <taxon>Oryzinae</taxon>
        <taxon>Oryza</taxon>
        <taxon>Oryza sativa</taxon>
    </lineage>
</organism>
<reference key="1">
    <citation type="journal article" date="2005" name="Nature">
        <title>The map-based sequence of the rice genome.</title>
        <authorList>
            <consortium name="International rice genome sequencing project (IRGSP)"/>
        </authorList>
    </citation>
    <scope>NUCLEOTIDE SEQUENCE [LARGE SCALE GENOMIC DNA]</scope>
    <source>
        <strain>cv. Nipponbare</strain>
    </source>
</reference>
<reference key="2">
    <citation type="journal article" date="2013" name="Rice">
        <title>Improvement of the Oryza sativa Nipponbare reference genome using next generation sequence and optical map data.</title>
        <authorList>
            <person name="Kawahara Y."/>
            <person name="de la Bastide M."/>
            <person name="Hamilton J.P."/>
            <person name="Kanamori H."/>
            <person name="McCombie W.R."/>
            <person name="Ouyang S."/>
            <person name="Schwartz D.C."/>
            <person name="Tanaka T."/>
            <person name="Wu J."/>
            <person name="Zhou S."/>
            <person name="Childs K.L."/>
            <person name="Davidson R.M."/>
            <person name="Lin H."/>
            <person name="Quesada-Ocampo L."/>
            <person name="Vaillancourt B."/>
            <person name="Sakai H."/>
            <person name="Lee S.S."/>
            <person name="Kim J."/>
            <person name="Numa H."/>
            <person name="Itoh T."/>
            <person name="Buell C.R."/>
            <person name="Matsumoto T."/>
        </authorList>
    </citation>
    <scope>GENOME REANNOTATION</scope>
    <source>
        <strain>cv. Nipponbare</strain>
    </source>
</reference>
<reference key="3">
    <citation type="journal article" date="2002" name="Plant Physiol.">
        <title>Cellulose synthase-like genes of rice.</title>
        <authorList>
            <person name="Hazen S.P."/>
            <person name="Scott-Craig J.S."/>
            <person name="Walton J.D."/>
        </authorList>
    </citation>
    <scope>GENE FAMILY</scope>
    <scope>NOMENCLATURE</scope>
</reference>
<comment type="function">
    <text evidence="1">Probable beta-1,4-glucan synthase rather involved in the synthesis of the xyloglucan backbone than cellulose. Seems to work simultaneously with xyloglucan 6-xylosyltransferase. Xyloglucan is a noncellulosic polysaccharides of plant cell wall and consists of a glucan backbone substituted by xylose, galactose and fucose (By similarity).</text>
</comment>
<comment type="subcellular location">
    <subcellularLocation>
        <location evidence="3">Golgi apparatus membrane</location>
        <topology evidence="3">Multi-pass membrane protein</topology>
    </subcellularLocation>
</comment>
<comment type="similarity">
    <text evidence="3">Belongs to the glycosyltransferase 2 family. Plant cellulose synthase-like C subfamily.</text>
</comment>
<evidence type="ECO:0000250" key="1"/>
<evidence type="ECO:0000255" key="2"/>
<evidence type="ECO:0000305" key="3"/>
<accession>Q84Z01</accession>
<dbReference type="EC" id="2.4.1.-"/>
<dbReference type="EMBL" id="AP005309">
    <property type="protein sequence ID" value="BAC56816.1"/>
    <property type="molecule type" value="Genomic_DNA"/>
</dbReference>
<dbReference type="EMBL" id="AP014963">
    <property type="status" value="NOT_ANNOTATED_CDS"/>
    <property type="molecule type" value="Genomic_DNA"/>
</dbReference>
<dbReference type="SMR" id="Q84Z01"/>
<dbReference type="FunCoup" id="Q84Z01">
    <property type="interactions" value="16"/>
</dbReference>
<dbReference type="STRING" id="39947.Q84Z01"/>
<dbReference type="CAZy" id="GT2">
    <property type="family name" value="Glycosyltransferase Family 2"/>
</dbReference>
<dbReference type="PaxDb" id="39947-Q84Z01"/>
<dbReference type="GeneID" id="107275797"/>
<dbReference type="KEGG" id="osa:107275797"/>
<dbReference type="eggNOG" id="ENOG502QTBF">
    <property type="taxonomic scope" value="Eukaryota"/>
</dbReference>
<dbReference type="InParanoid" id="Q84Z01"/>
<dbReference type="OrthoDB" id="72851at2759"/>
<dbReference type="Proteomes" id="UP000000763">
    <property type="component" value="Chromosome 7"/>
</dbReference>
<dbReference type="Proteomes" id="UP000059680">
    <property type="component" value="Chromosome 7"/>
</dbReference>
<dbReference type="GO" id="GO:0005794">
    <property type="term" value="C:Golgi apparatus"/>
    <property type="evidence" value="ECO:0000318"/>
    <property type="project" value="GO_Central"/>
</dbReference>
<dbReference type="GO" id="GO:0000139">
    <property type="term" value="C:Golgi membrane"/>
    <property type="evidence" value="ECO:0007669"/>
    <property type="project" value="UniProtKB-SubCell"/>
</dbReference>
<dbReference type="GO" id="GO:0016757">
    <property type="term" value="F:glycosyltransferase activity"/>
    <property type="evidence" value="ECO:0000318"/>
    <property type="project" value="GO_Central"/>
</dbReference>
<dbReference type="GO" id="GO:0071555">
    <property type="term" value="P:cell wall organization"/>
    <property type="evidence" value="ECO:0007669"/>
    <property type="project" value="UniProtKB-KW"/>
</dbReference>
<dbReference type="FunFam" id="3.90.550.10:FF:000007">
    <property type="entry name" value="probable xyloglucan glycosyltransferase 5"/>
    <property type="match status" value="1"/>
</dbReference>
<dbReference type="Gene3D" id="3.90.550.10">
    <property type="entry name" value="Spore Coat Polysaccharide Biosynthesis Protein SpsA, Chain A"/>
    <property type="match status" value="1"/>
</dbReference>
<dbReference type="InterPro" id="IPR001173">
    <property type="entry name" value="Glyco_trans_2-like"/>
</dbReference>
<dbReference type="InterPro" id="IPR029044">
    <property type="entry name" value="Nucleotide-diphossugar_trans"/>
</dbReference>
<dbReference type="PANTHER" id="PTHR32044">
    <property type="entry name" value="GLUCOMANNAN 4-BETA-MANNOSYLTRANSFERASE 9"/>
    <property type="match status" value="1"/>
</dbReference>
<dbReference type="PANTHER" id="PTHR32044:SF59">
    <property type="entry name" value="XYLOGLUCAN GLYCOSYLTRANSFERASE 10-RELATED"/>
    <property type="match status" value="1"/>
</dbReference>
<dbReference type="Pfam" id="PF13632">
    <property type="entry name" value="Glyco_trans_2_3"/>
    <property type="match status" value="1"/>
</dbReference>
<dbReference type="SUPFAM" id="SSF53448">
    <property type="entry name" value="Nucleotide-diphospho-sugar transferases"/>
    <property type="match status" value="1"/>
</dbReference>
<gene>
    <name type="primary">CSLC10</name>
    <name type="ordered locus">Os07g0124750</name>
    <name type="ordered locus">LOC_Os07g03260</name>
    <name type="ORF">P0474G09.119</name>
</gene>
<sequence length="686" mass="77176">MAPWSGFWAASRPALAAAAAGGTPVVVKMDNPNWSISEIDADGGEFLAGGRRRGRGKNAKQITWVLLLKAHRAAGCLAWLASAAVALGAAARRRVAAGRTDDADAETPAPRSRLYAFIRASLLLSVFLLAVELAAHANGRGRVLAASVDSFHSSWVRFRAAYVAPPLQLLADACVVLFLVQSADRLVQCLGCLYIHLNRIKPKPISSPAAAAAALPDLEDPDAGDYYPMVLVQIPMCNEKEVYQQSIAAVCNLDWPRSNILVQVLDDSDDPITQSLIKEEVEKWRQNGARIVYRHRVLREGYKAGNLKSAMSCSYVKDYEYVAIFDADFQPYPDFLKRTVPHFKDNEELGLVQARWSFVNKDENLLTRLQNINLCFHFEVEQQVNGIFINFFGFNGTAGVWRIKALEDSGGWMERTTVEDMDIAVRAHLNGWKFVFLNDVECQCELPESYEAYRKQQHRWHSGPMQLFRLCLPDIIRCKIAFWKKANLIFLFFLLRKLILPFYSFTLFCIILPMTMFIPEAELPDWVVCYIPALMSFLNILPAPKSFPFIIPYLLFENTMSVTKFNAMISGLFQLGSAYEWVVTKKSGRSSEGDLIALAPKELKQQKILDLTAIKEQSMLKQSSPRNEAKKKYNRIYKKELALSLLLLTAAARSLLSKQGIHFYFLMFQGLSFLLVGLDLIGEDVK</sequence>
<protein>
    <recommendedName>
        <fullName>Putative xyloglucan glycosyltransferase 10</fullName>
        <ecNumber>2.4.1.-</ecNumber>
    </recommendedName>
    <alternativeName>
        <fullName>Cellulose synthase-like protein C10</fullName>
    </alternativeName>
    <alternativeName>
        <fullName>OsCslC10</fullName>
    </alternativeName>
</protein>
<feature type="chain" id="PRO_0000319389" description="Putative xyloglucan glycosyltransferase 10">
    <location>
        <begin position="1"/>
        <end position="686"/>
    </location>
</feature>
<feature type="transmembrane region" description="Helical" evidence="2">
    <location>
        <begin position="114"/>
        <end position="134"/>
    </location>
</feature>
<feature type="transmembrane region" description="Helical" evidence="2">
    <location>
        <begin position="160"/>
        <end position="180"/>
    </location>
</feature>
<feature type="transmembrane region" description="Helical" evidence="2">
    <location>
        <begin position="498"/>
        <end position="518"/>
    </location>
</feature>
<feature type="transmembrane region" description="Helical" evidence="2">
    <location>
        <begin position="523"/>
        <end position="543"/>
    </location>
</feature>
<feature type="transmembrane region" description="Helical" evidence="2">
    <location>
        <begin position="640"/>
        <end position="656"/>
    </location>
</feature>
<feature type="transmembrane region" description="Helical" evidence="2">
    <location>
        <begin position="661"/>
        <end position="681"/>
    </location>
</feature>
<feature type="active site" evidence="2">
    <location>
        <position position="267"/>
    </location>
</feature>
<feature type="active site" evidence="2">
    <location>
        <position position="420"/>
    </location>
</feature>
<feature type="binding site" evidence="2">
    <location>
        <position position="326"/>
    </location>
    <ligand>
        <name>substrate</name>
    </ligand>
</feature>
<feature type="binding site" evidence="2">
    <location>
        <position position="328"/>
    </location>
    <ligand>
        <name>substrate</name>
    </ligand>
</feature>
<keyword id="KW-0961">Cell wall biogenesis/degradation</keyword>
<keyword id="KW-0328">Glycosyltransferase</keyword>
<keyword id="KW-0333">Golgi apparatus</keyword>
<keyword id="KW-0472">Membrane</keyword>
<keyword id="KW-1185">Reference proteome</keyword>
<keyword id="KW-0808">Transferase</keyword>
<keyword id="KW-0812">Transmembrane</keyword>
<keyword id="KW-1133">Transmembrane helix</keyword>
<name>CSLCA_ORYSJ</name>